<dbReference type="EMBL" id="AJ879453">
    <property type="protein sequence ID" value="CAI53782.1"/>
    <property type="molecule type" value="Genomic_DNA"/>
</dbReference>
<dbReference type="RefSeq" id="YP_319753.1">
    <property type="nucleotide sequence ID" value="NC_007407.1"/>
</dbReference>
<dbReference type="SMR" id="Q3V546"/>
<dbReference type="GeneID" id="3677509"/>
<dbReference type="GO" id="GO:0009535">
    <property type="term" value="C:chloroplast thylakoid membrane"/>
    <property type="evidence" value="ECO:0007669"/>
    <property type="project" value="UniProtKB-SubCell"/>
</dbReference>
<dbReference type="GO" id="GO:0005886">
    <property type="term" value="C:plasma membrane"/>
    <property type="evidence" value="ECO:0007669"/>
    <property type="project" value="UniProtKB-UniRule"/>
</dbReference>
<dbReference type="GO" id="GO:0045259">
    <property type="term" value="C:proton-transporting ATP synthase complex"/>
    <property type="evidence" value="ECO:0007669"/>
    <property type="project" value="UniProtKB-KW"/>
</dbReference>
<dbReference type="GO" id="GO:0046933">
    <property type="term" value="F:proton-transporting ATP synthase activity, rotational mechanism"/>
    <property type="evidence" value="ECO:0007669"/>
    <property type="project" value="UniProtKB-UniRule"/>
</dbReference>
<dbReference type="CDD" id="cd00310">
    <property type="entry name" value="ATP-synt_Fo_a_6"/>
    <property type="match status" value="1"/>
</dbReference>
<dbReference type="FunFam" id="1.20.120.220:FF:000001">
    <property type="entry name" value="ATP synthase subunit a, chloroplastic"/>
    <property type="match status" value="1"/>
</dbReference>
<dbReference type="Gene3D" id="1.20.120.220">
    <property type="entry name" value="ATP synthase, F0 complex, subunit A"/>
    <property type="match status" value="1"/>
</dbReference>
<dbReference type="HAMAP" id="MF_01393">
    <property type="entry name" value="ATP_synth_a_bact"/>
    <property type="match status" value="1"/>
</dbReference>
<dbReference type="InterPro" id="IPR045082">
    <property type="entry name" value="ATP_syn_F0_a_bact/chloroplast"/>
</dbReference>
<dbReference type="InterPro" id="IPR000568">
    <property type="entry name" value="ATP_synth_F0_asu"/>
</dbReference>
<dbReference type="InterPro" id="IPR023011">
    <property type="entry name" value="ATP_synth_F0_asu_AS"/>
</dbReference>
<dbReference type="InterPro" id="IPR035908">
    <property type="entry name" value="F0_ATP_A_sf"/>
</dbReference>
<dbReference type="NCBIfam" id="TIGR01131">
    <property type="entry name" value="ATP_synt_6_or_A"/>
    <property type="match status" value="1"/>
</dbReference>
<dbReference type="PANTHER" id="PTHR42823">
    <property type="entry name" value="ATP SYNTHASE SUBUNIT A, CHLOROPLASTIC"/>
    <property type="match status" value="1"/>
</dbReference>
<dbReference type="PANTHER" id="PTHR42823:SF3">
    <property type="entry name" value="ATP SYNTHASE SUBUNIT A, CHLOROPLASTIC"/>
    <property type="match status" value="1"/>
</dbReference>
<dbReference type="Pfam" id="PF00119">
    <property type="entry name" value="ATP-synt_A"/>
    <property type="match status" value="1"/>
</dbReference>
<dbReference type="PRINTS" id="PR00123">
    <property type="entry name" value="ATPASEA"/>
</dbReference>
<dbReference type="SUPFAM" id="SSF81336">
    <property type="entry name" value="F1F0 ATP synthase subunit A"/>
    <property type="match status" value="1"/>
</dbReference>
<dbReference type="PROSITE" id="PS00449">
    <property type="entry name" value="ATPASE_A"/>
    <property type="match status" value="1"/>
</dbReference>
<reference key="1">
    <citation type="journal article" date="2005" name="Mol. Biol. Evol.">
        <title>Analysis of Acorus calamus chloroplast genome and its phylogenetic implications.</title>
        <authorList>
            <person name="Goremykin V.V."/>
            <person name="Holland B."/>
            <person name="Hirsch-Ernst K.I."/>
            <person name="Hellwig F.H."/>
        </authorList>
    </citation>
    <scope>NUCLEOTIDE SEQUENCE [LARGE SCALE GENOMIC DNA]</scope>
</reference>
<name>ATPI_ACOCL</name>
<sequence>MNVILCSSNMLKGLYDISGVEVGQHLYWQIGGFQVHAQVLITSWVVIAILLGSVTVAVRNPQTIPTNGQNFFEYVLEFIRDLSKTQIGEEYGPWVPFIGTMFLFIFVSNWSGALLPWKLIELPHGELAAPTNDINTTVALALPTSVAYFYAGLTKKGLGYFGKYIQPTPILLPINILEDFTKPLSLSFRLFGNILADELVVVVLVSLVPLVVPIPVMFLGLFTSGIQALIFATLAAAYIGESMEGHH</sequence>
<comment type="function">
    <text evidence="1">Key component of the proton channel; it plays a direct role in the translocation of protons across the membrane.</text>
</comment>
<comment type="subunit">
    <text evidence="1">F-type ATPases have 2 components, CF(1) - the catalytic core - and CF(0) - the membrane proton channel. CF(1) has five subunits: alpha(3), beta(3), gamma(1), delta(1), epsilon(1). CF(0) has four main subunits: a, b, b' and c.</text>
</comment>
<comment type="subcellular location">
    <subcellularLocation>
        <location evidence="1">Plastid</location>
        <location evidence="1">Chloroplast thylakoid membrane</location>
        <topology evidence="1">Multi-pass membrane protein</topology>
    </subcellularLocation>
</comment>
<comment type="similarity">
    <text evidence="1">Belongs to the ATPase A chain family.</text>
</comment>
<feature type="chain" id="PRO_0000362524" description="ATP synthase subunit a, chloroplastic">
    <location>
        <begin position="1"/>
        <end position="247"/>
    </location>
</feature>
<feature type="transmembrane region" description="Helical" evidence="1">
    <location>
        <begin position="38"/>
        <end position="58"/>
    </location>
</feature>
<feature type="transmembrane region" description="Helical" evidence="1">
    <location>
        <begin position="95"/>
        <end position="115"/>
    </location>
</feature>
<feature type="transmembrane region" description="Helical" evidence="1">
    <location>
        <begin position="134"/>
        <end position="154"/>
    </location>
</feature>
<feature type="transmembrane region" description="Helical" evidence="1">
    <location>
        <begin position="199"/>
        <end position="219"/>
    </location>
</feature>
<feature type="transmembrane region" description="Helical" evidence="1">
    <location>
        <begin position="220"/>
        <end position="240"/>
    </location>
</feature>
<evidence type="ECO:0000255" key="1">
    <source>
        <dbReference type="HAMAP-Rule" id="MF_01393"/>
    </source>
</evidence>
<keyword id="KW-0066">ATP synthesis</keyword>
<keyword id="KW-0138">CF(0)</keyword>
<keyword id="KW-0150">Chloroplast</keyword>
<keyword id="KW-0375">Hydrogen ion transport</keyword>
<keyword id="KW-0406">Ion transport</keyword>
<keyword id="KW-0472">Membrane</keyword>
<keyword id="KW-0934">Plastid</keyword>
<keyword id="KW-0793">Thylakoid</keyword>
<keyword id="KW-0812">Transmembrane</keyword>
<keyword id="KW-1133">Transmembrane helix</keyword>
<keyword id="KW-0813">Transport</keyword>
<protein>
    <recommendedName>
        <fullName evidence="1">ATP synthase subunit a, chloroplastic</fullName>
    </recommendedName>
    <alternativeName>
        <fullName evidence="1">ATP synthase F0 sector subunit a</fullName>
    </alternativeName>
    <alternativeName>
        <fullName evidence="1">F-ATPase subunit IV</fullName>
    </alternativeName>
</protein>
<accession>Q3V546</accession>
<organism>
    <name type="scientific">Acorus calamus</name>
    <name type="common">Sweet flag</name>
    <dbReference type="NCBI Taxonomy" id="4465"/>
    <lineage>
        <taxon>Eukaryota</taxon>
        <taxon>Viridiplantae</taxon>
        <taxon>Streptophyta</taxon>
        <taxon>Embryophyta</taxon>
        <taxon>Tracheophyta</taxon>
        <taxon>Spermatophyta</taxon>
        <taxon>Magnoliopsida</taxon>
        <taxon>Liliopsida</taxon>
        <taxon>Acoraceae</taxon>
        <taxon>Acorus</taxon>
    </lineage>
</organism>
<proteinExistence type="inferred from homology"/>
<geneLocation type="chloroplast"/>
<gene>
    <name evidence="1" type="primary">atpI</name>
</gene>